<gene>
    <name type="primary">msp4</name>
</gene>
<evidence type="ECO:0000255" key="1">
    <source>
        <dbReference type="PROSITE-ProRule" id="PRU00303"/>
    </source>
</evidence>
<evidence type="ECO:0000269" key="2">
    <source>
    </source>
</evidence>
<evidence type="ECO:0000305" key="3"/>
<accession>Q07408</accession>
<name>MSP4_ANAMA</name>
<comment type="similarity">
    <text evidence="3">Belongs to the surface antigen msp4 family.</text>
</comment>
<keyword id="KW-0903">Direct protein sequencing</keyword>
<keyword id="KW-0732">Signal</keyword>
<reference key="1">
    <citation type="journal article" date="1993" name="Gene">
        <title>Derivation of the complete msp4 gene sequence of Anaplasma marginale without cloning.</title>
        <authorList>
            <person name="Oberle S.M."/>
            <person name="Barbet A.F."/>
        </authorList>
    </citation>
    <scope>NUCLEOTIDE SEQUENCE [GENOMIC DNA]</scope>
    <scope>PROTEIN SEQUENCE OF 30-53</scope>
</reference>
<dbReference type="EMBL" id="L01987">
    <property type="protein sequence ID" value="AAC36877.1"/>
    <property type="molecule type" value="Unassigned_DNA"/>
</dbReference>
<dbReference type="PIR" id="I39648">
    <property type="entry name" value="I39648"/>
</dbReference>
<dbReference type="RefSeq" id="WP_010266964.1">
    <property type="nucleotide sequence ID" value="NZ_PKOF01000026.1"/>
</dbReference>
<dbReference type="GeneID" id="7398783"/>
<dbReference type="Gene3D" id="2.40.160.20">
    <property type="match status" value="1"/>
</dbReference>
<dbReference type="InterPro" id="IPR002566">
    <property type="entry name" value="Msp4_OMP-like"/>
</dbReference>
<dbReference type="InterPro" id="IPR011250">
    <property type="entry name" value="OMP/PagP_b-brl"/>
</dbReference>
<dbReference type="Pfam" id="PF01617">
    <property type="entry name" value="Surface_Ag_2"/>
    <property type="match status" value="1"/>
</dbReference>
<dbReference type="SUPFAM" id="SSF56925">
    <property type="entry name" value="OMPA-like"/>
    <property type="match status" value="1"/>
</dbReference>
<dbReference type="PROSITE" id="PS51257">
    <property type="entry name" value="PROKAR_LIPOPROTEIN"/>
    <property type="match status" value="1"/>
</dbReference>
<proteinExistence type="evidence at protein level"/>
<protein>
    <recommendedName>
        <fullName>Major surface antigen 4</fullName>
    </recommendedName>
</protein>
<sequence>MNYRELFTGGLSAATVCACSLLVSGAVVASPMSHEVASEGGVMGGSFYVGAAYSPAFPSVTSFDMRESSKETSYVRGYDKSIATIDVSVPANFSKSGYTFAFSKNLITSFDGAVGYSLGGARVELEASYRRFATLADGQYAKSGAESLAAITRDANITETNYFVVKIDEITNTSVMLNGCYDVLHTDLPVSPYVCAGIGASFVDISKQVTTKLAYRGKVGISYQFTPEISLVAGGFYHGLFDESYKDIPAHNSVKFSGEAKASVKAHIADYGFNLGARFLFS</sequence>
<organism>
    <name type="scientific">Anaplasma marginale</name>
    <dbReference type="NCBI Taxonomy" id="770"/>
    <lineage>
        <taxon>Bacteria</taxon>
        <taxon>Pseudomonadati</taxon>
        <taxon>Pseudomonadota</taxon>
        <taxon>Alphaproteobacteria</taxon>
        <taxon>Rickettsiales</taxon>
        <taxon>Anaplasmataceae</taxon>
        <taxon>Anaplasma</taxon>
    </lineage>
</organism>
<feature type="signal peptide" evidence="1 2">
    <location>
        <begin position="1"/>
        <end position="29"/>
    </location>
</feature>
<feature type="chain" id="PRO_0000021770" description="Major surface antigen 4">
    <location>
        <begin position="30"/>
        <end position="282"/>
    </location>
</feature>